<reference key="1">
    <citation type="journal article" date="2011" name="J. Bacteriol.">
        <title>Genome sequence of the verrucomicrobium Opitutus terrae PB90-1, an abundant inhabitant of rice paddy soil ecosystems.</title>
        <authorList>
            <person name="van Passel M.W."/>
            <person name="Kant R."/>
            <person name="Palva A."/>
            <person name="Copeland A."/>
            <person name="Lucas S."/>
            <person name="Lapidus A."/>
            <person name="Glavina del Rio T."/>
            <person name="Pitluck S."/>
            <person name="Goltsman E."/>
            <person name="Clum A."/>
            <person name="Sun H."/>
            <person name="Schmutz J."/>
            <person name="Larimer F.W."/>
            <person name="Land M.L."/>
            <person name="Hauser L."/>
            <person name="Kyrpides N."/>
            <person name="Mikhailova N."/>
            <person name="Richardson P.P."/>
            <person name="Janssen P.H."/>
            <person name="de Vos W.M."/>
            <person name="Smidt H."/>
        </authorList>
    </citation>
    <scope>NUCLEOTIDE SEQUENCE [LARGE SCALE GENOMIC DNA]</scope>
    <source>
        <strain>DSM 11246 / JCM 15787 / PB90-1</strain>
    </source>
</reference>
<evidence type="ECO:0000255" key="1">
    <source>
        <dbReference type="HAMAP-Rule" id="MF_01013"/>
    </source>
</evidence>
<dbReference type="EC" id="4.3.2.10" evidence="1"/>
<dbReference type="EMBL" id="CP001032">
    <property type="protein sequence ID" value="ACB76109.1"/>
    <property type="molecule type" value="Genomic_DNA"/>
</dbReference>
<dbReference type="RefSeq" id="WP_012375644.1">
    <property type="nucleotide sequence ID" value="NC_010571.1"/>
</dbReference>
<dbReference type="SMR" id="B1ZX57"/>
<dbReference type="STRING" id="452637.Oter_2828"/>
<dbReference type="KEGG" id="ote:Oter_2828"/>
<dbReference type="eggNOG" id="COG0107">
    <property type="taxonomic scope" value="Bacteria"/>
</dbReference>
<dbReference type="HOGENOM" id="CLU_048577_4_0_0"/>
<dbReference type="OrthoDB" id="9781903at2"/>
<dbReference type="UniPathway" id="UPA00031">
    <property type="reaction ID" value="UER00010"/>
</dbReference>
<dbReference type="Proteomes" id="UP000007013">
    <property type="component" value="Chromosome"/>
</dbReference>
<dbReference type="GO" id="GO:0005737">
    <property type="term" value="C:cytoplasm"/>
    <property type="evidence" value="ECO:0007669"/>
    <property type="project" value="UniProtKB-SubCell"/>
</dbReference>
<dbReference type="GO" id="GO:0000107">
    <property type="term" value="F:imidazoleglycerol-phosphate synthase activity"/>
    <property type="evidence" value="ECO:0007669"/>
    <property type="project" value="UniProtKB-UniRule"/>
</dbReference>
<dbReference type="GO" id="GO:0016833">
    <property type="term" value="F:oxo-acid-lyase activity"/>
    <property type="evidence" value="ECO:0007669"/>
    <property type="project" value="InterPro"/>
</dbReference>
<dbReference type="GO" id="GO:0000105">
    <property type="term" value="P:L-histidine biosynthetic process"/>
    <property type="evidence" value="ECO:0007669"/>
    <property type="project" value="UniProtKB-UniRule"/>
</dbReference>
<dbReference type="CDD" id="cd04731">
    <property type="entry name" value="HisF"/>
    <property type="match status" value="1"/>
</dbReference>
<dbReference type="FunFam" id="3.20.20.70:FF:000006">
    <property type="entry name" value="Imidazole glycerol phosphate synthase subunit HisF"/>
    <property type="match status" value="1"/>
</dbReference>
<dbReference type="Gene3D" id="3.20.20.70">
    <property type="entry name" value="Aldolase class I"/>
    <property type="match status" value="1"/>
</dbReference>
<dbReference type="HAMAP" id="MF_01013">
    <property type="entry name" value="HisF"/>
    <property type="match status" value="1"/>
</dbReference>
<dbReference type="InterPro" id="IPR013785">
    <property type="entry name" value="Aldolase_TIM"/>
</dbReference>
<dbReference type="InterPro" id="IPR020021">
    <property type="entry name" value="Glycosyl_amidation-assoc_WbuZ"/>
</dbReference>
<dbReference type="InterPro" id="IPR006062">
    <property type="entry name" value="His_biosynth"/>
</dbReference>
<dbReference type="InterPro" id="IPR004651">
    <property type="entry name" value="HisF"/>
</dbReference>
<dbReference type="InterPro" id="IPR050064">
    <property type="entry name" value="IGPS_HisA/HisF"/>
</dbReference>
<dbReference type="InterPro" id="IPR011060">
    <property type="entry name" value="RibuloseP-bd_barrel"/>
</dbReference>
<dbReference type="NCBIfam" id="TIGR00735">
    <property type="entry name" value="hisF"/>
    <property type="match status" value="1"/>
</dbReference>
<dbReference type="NCBIfam" id="TIGR03572">
    <property type="entry name" value="WbuZ"/>
    <property type="match status" value="1"/>
</dbReference>
<dbReference type="PANTHER" id="PTHR21235:SF2">
    <property type="entry name" value="IMIDAZOLE GLYCEROL PHOSPHATE SYNTHASE HISHF"/>
    <property type="match status" value="1"/>
</dbReference>
<dbReference type="PANTHER" id="PTHR21235">
    <property type="entry name" value="IMIDAZOLE GLYCEROL PHOSPHATE SYNTHASE SUBUNIT HISF/H IGP SYNTHASE SUBUNIT HISF/H"/>
    <property type="match status" value="1"/>
</dbReference>
<dbReference type="Pfam" id="PF00977">
    <property type="entry name" value="His_biosynth"/>
    <property type="match status" value="1"/>
</dbReference>
<dbReference type="SUPFAM" id="SSF51366">
    <property type="entry name" value="Ribulose-phoshate binding barrel"/>
    <property type="match status" value="1"/>
</dbReference>
<gene>
    <name evidence="1" type="primary">hisF</name>
    <name type="ordered locus">Oter_2828</name>
</gene>
<keyword id="KW-0028">Amino-acid biosynthesis</keyword>
<keyword id="KW-0963">Cytoplasm</keyword>
<keyword id="KW-0368">Histidine biosynthesis</keyword>
<keyword id="KW-0456">Lyase</keyword>
<keyword id="KW-1185">Reference proteome</keyword>
<sequence length="253" mass="26757">MLSRRIIPCLDVNAGRVVKGVRFQQLRDAGDPVACARAYDAQGADELIFLDITASSDERKIMHDVVAATAEQCFMPLTVGGGLRTVADIETMLKAGADKVSLNTAAIKNPQLIADAAERFGVQCIVVAIDAKREPDGQSWRVYTHGGRNPTELDAIAWARRAVELGAGEILLTSMDRDGTGDGYDLELTRGVSDAVSVPVIASGGAGTLQHLADVLDQGHASAVLAASIFHFGTYTIAQAKAFLGQRGVPVRS</sequence>
<proteinExistence type="inferred from homology"/>
<protein>
    <recommendedName>
        <fullName evidence="1">Imidazole glycerol phosphate synthase subunit HisF</fullName>
        <ecNumber evidence="1">4.3.2.10</ecNumber>
    </recommendedName>
    <alternativeName>
        <fullName evidence="1">IGP synthase cyclase subunit</fullName>
    </alternativeName>
    <alternativeName>
        <fullName evidence="1">IGP synthase subunit HisF</fullName>
    </alternativeName>
    <alternativeName>
        <fullName evidence="1">ImGP synthase subunit HisF</fullName>
        <shortName evidence="1">IGPS subunit HisF</shortName>
    </alternativeName>
</protein>
<organism>
    <name type="scientific">Opitutus terrae (strain DSM 11246 / JCM 15787 / PB90-1)</name>
    <dbReference type="NCBI Taxonomy" id="452637"/>
    <lineage>
        <taxon>Bacteria</taxon>
        <taxon>Pseudomonadati</taxon>
        <taxon>Verrucomicrobiota</taxon>
        <taxon>Opitutia</taxon>
        <taxon>Opitutales</taxon>
        <taxon>Opitutaceae</taxon>
        <taxon>Opitutus</taxon>
    </lineage>
</organism>
<accession>B1ZX57</accession>
<name>HIS6_OPITP</name>
<comment type="function">
    <text evidence="1">IGPS catalyzes the conversion of PRFAR and glutamine to IGP, AICAR and glutamate. The HisF subunit catalyzes the cyclization activity that produces IGP and AICAR from PRFAR using the ammonia provided by the HisH subunit.</text>
</comment>
<comment type="catalytic activity">
    <reaction evidence="1">
        <text>5-[(5-phospho-1-deoxy-D-ribulos-1-ylimino)methylamino]-1-(5-phospho-beta-D-ribosyl)imidazole-4-carboxamide + L-glutamine = D-erythro-1-(imidazol-4-yl)glycerol 3-phosphate + 5-amino-1-(5-phospho-beta-D-ribosyl)imidazole-4-carboxamide + L-glutamate + H(+)</text>
        <dbReference type="Rhea" id="RHEA:24793"/>
        <dbReference type="ChEBI" id="CHEBI:15378"/>
        <dbReference type="ChEBI" id="CHEBI:29985"/>
        <dbReference type="ChEBI" id="CHEBI:58278"/>
        <dbReference type="ChEBI" id="CHEBI:58359"/>
        <dbReference type="ChEBI" id="CHEBI:58475"/>
        <dbReference type="ChEBI" id="CHEBI:58525"/>
        <dbReference type="EC" id="4.3.2.10"/>
    </reaction>
</comment>
<comment type="pathway">
    <text evidence="1">Amino-acid biosynthesis; L-histidine biosynthesis; L-histidine from 5-phospho-alpha-D-ribose 1-diphosphate: step 5/9.</text>
</comment>
<comment type="subunit">
    <text evidence="1">Heterodimer of HisH and HisF.</text>
</comment>
<comment type="subcellular location">
    <subcellularLocation>
        <location evidence="1">Cytoplasm</location>
    </subcellularLocation>
</comment>
<comment type="similarity">
    <text evidence="1">Belongs to the HisA/HisF family.</text>
</comment>
<feature type="chain" id="PRO_1000190587" description="Imidazole glycerol phosphate synthase subunit HisF">
    <location>
        <begin position="1"/>
        <end position="253"/>
    </location>
</feature>
<feature type="active site" evidence="1">
    <location>
        <position position="11"/>
    </location>
</feature>
<feature type="active site" evidence="1">
    <location>
        <position position="130"/>
    </location>
</feature>